<organism>
    <name type="scientific">Saccharomyces cerevisiae (strain ATCC 204508 / S288c)</name>
    <name type="common">Baker's yeast</name>
    <dbReference type="NCBI Taxonomy" id="559292"/>
    <lineage>
        <taxon>Eukaryota</taxon>
        <taxon>Fungi</taxon>
        <taxon>Dikarya</taxon>
        <taxon>Ascomycota</taxon>
        <taxon>Saccharomycotina</taxon>
        <taxon>Saccharomycetes</taxon>
        <taxon>Saccharomycetales</taxon>
        <taxon>Saccharomycetaceae</taxon>
        <taxon>Saccharomyces</taxon>
    </lineage>
</organism>
<keyword id="KW-0002">3D-structure</keyword>
<keyword id="KW-0066">ATP synthesis</keyword>
<keyword id="KW-0138">CF(0)</keyword>
<keyword id="KW-0903">Direct protein sequencing</keyword>
<keyword id="KW-0375">Hydrogen ion transport</keyword>
<keyword id="KW-0406">Ion transport</keyword>
<keyword id="KW-0472">Membrane</keyword>
<keyword id="KW-0496">Mitochondrion</keyword>
<keyword id="KW-1185">Reference proteome</keyword>
<keyword id="KW-0812">Transmembrane</keyword>
<keyword id="KW-1133">Transmembrane helix</keyword>
<keyword id="KW-0813">Transport</keyword>
<accession>P81450</accession>
<accession>D6W0K1</accession>
<comment type="function">
    <text>Mitochondrial membrane ATP synthase (F(1)F(0) ATP synthase or Complex V) produces ATP from ADP in the presence of a proton gradient across the membrane which is generated by electron transport complexes of the respiratory chain. F-type ATPases consist of two structural domains, F(1) - containing the extramembraneous catalytic core and F(0) - containing the membrane proton channel, linked together by a central stalk and a peripheral stalk. During catalysis, ATP synthesis in the catalytic domain of F(1) is coupled via a rotary mechanism of the central stalk subunits to proton translocation. Part of the complex F(0) domain. Minor subunit located with subunit a in the membrane.</text>
</comment>
<comment type="subunit">
    <text>F-type ATPases have 2 components, CF(1) - the catalytic core - and CF(0) - the membrane proton channel. In yeast, the dimeric form of ATP synthase consists of 17 polypeptides: alpha, beta, gamma, delta, epsilon, 4 (B), 5 (OSCP), 6 (A), 8, 9 (C), d, E (Tim11), f, g, h, i/j and k.</text>
</comment>
<comment type="subcellular location">
    <subcellularLocation>
        <location evidence="3">Mitochondrion membrane</location>
        <topology evidence="3">Single-pass membrane protein</topology>
    </subcellularLocation>
</comment>
<comment type="mass spectrometry"/>
<comment type="miscellaneous">
    <text evidence="2">Present with 6540 molecules/cell in log phase SD medium.</text>
</comment>
<comment type="similarity">
    <text evidence="5">Belongs to the ATPase j subunit family.</text>
</comment>
<gene>
    <name type="primary">ATP18</name>
    <name type="ordered locus">YML081C-A</name>
    <name type="ORF">YML081BC</name>
</gene>
<sequence>MLKRFPTPILKVYWPFFVAGAAVYYGMSKAADLSSNTKEFINDPRNPRFAKGGKFVEVD</sequence>
<protein>
    <recommendedName>
        <fullName>ATP synthase subunit J, mitochondrial</fullName>
    </recommendedName>
    <alternativeName>
        <fullName>ATPase synthase I subunit</fullName>
    </alternativeName>
</protein>
<reference key="1">
    <citation type="journal article" date="1999" name="J. Biol. Chem.">
        <title>Isolation of supernumerary yeast ATP synthase subunits e and i. Characterization of subunit i and disruption of its structural gene ATP18.</title>
        <authorList>
            <person name="Vaillier J."/>
            <person name="Arselin G."/>
            <person name="Graves P.-V."/>
            <person name="Camougrand N."/>
            <person name="Velours J."/>
        </authorList>
    </citation>
    <scope>NUCLEOTIDE SEQUENCE [GENOMIC DNA]</scope>
    <scope>PROTEIN SEQUENCE OF 1-15</scope>
    <scope>IDENTIFICATION</scope>
    <scope>MASS SPECTROMETRY</scope>
    <source>
        <strain>ATCC 24657 / D273-10B</strain>
    </source>
</reference>
<reference key="2">
    <citation type="journal article" date="1997" name="Nature">
        <title>The nucleotide sequence of Saccharomyces cerevisiae chromosome XIII.</title>
        <authorList>
            <person name="Bowman S."/>
            <person name="Churcher C.M."/>
            <person name="Badcock K."/>
            <person name="Brown D."/>
            <person name="Chillingworth T."/>
            <person name="Connor R."/>
            <person name="Dedman K."/>
            <person name="Devlin K."/>
            <person name="Gentles S."/>
            <person name="Hamlin N."/>
            <person name="Hunt S."/>
            <person name="Jagels K."/>
            <person name="Lye G."/>
            <person name="Moule S."/>
            <person name="Odell C."/>
            <person name="Pearson D."/>
            <person name="Rajandream M.A."/>
            <person name="Rice P."/>
            <person name="Skelton J."/>
            <person name="Walsh S.V."/>
            <person name="Whitehead S."/>
            <person name="Barrell B.G."/>
        </authorList>
    </citation>
    <scope>NUCLEOTIDE SEQUENCE [LARGE SCALE GENOMIC DNA]</scope>
    <source>
        <strain>ATCC 204508 / S288c</strain>
    </source>
</reference>
<reference key="3">
    <citation type="journal article" date="2014" name="G3 (Bethesda)">
        <title>The reference genome sequence of Saccharomyces cerevisiae: Then and now.</title>
        <authorList>
            <person name="Engel S.R."/>
            <person name="Dietrich F.S."/>
            <person name="Fisk D.G."/>
            <person name="Binkley G."/>
            <person name="Balakrishnan R."/>
            <person name="Costanzo M.C."/>
            <person name="Dwight S.S."/>
            <person name="Hitz B.C."/>
            <person name="Karra K."/>
            <person name="Nash R.S."/>
            <person name="Weng S."/>
            <person name="Wong E.D."/>
            <person name="Lloyd P."/>
            <person name="Skrzypek M.S."/>
            <person name="Miyasato S.R."/>
            <person name="Simison M."/>
            <person name="Cherry J.M."/>
        </authorList>
    </citation>
    <scope>GENOME REANNOTATION</scope>
    <source>
        <strain>ATCC 204508 / S288c</strain>
    </source>
</reference>
<reference key="4">
    <citation type="journal article" date="2007" name="Genome Res.">
        <title>Approaching a complete repository of sequence-verified protein-encoding clones for Saccharomyces cerevisiae.</title>
        <authorList>
            <person name="Hu Y."/>
            <person name="Rolfs A."/>
            <person name="Bhullar B."/>
            <person name="Murthy T.V.S."/>
            <person name="Zhu C."/>
            <person name="Berger M.F."/>
            <person name="Camargo A.A."/>
            <person name="Kelley F."/>
            <person name="McCarron S."/>
            <person name="Jepson D."/>
            <person name="Richardson A."/>
            <person name="Raphael J."/>
            <person name="Moreira D."/>
            <person name="Taycher E."/>
            <person name="Zuo D."/>
            <person name="Mohr S."/>
            <person name="Kane M.F."/>
            <person name="Williamson J."/>
            <person name="Simpson A.J.G."/>
            <person name="Bulyk M.L."/>
            <person name="Harlow E."/>
            <person name="Marsischky G."/>
            <person name="Kolodner R.D."/>
            <person name="LaBaer J."/>
        </authorList>
    </citation>
    <scope>NUCLEOTIDE SEQUENCE [GENOMIC DNA]</scope>
    <source>
        <strain>ATCC 204508 / S288c</strain>
    </source>
</reference>
<reference key="5">
    <citation type="journal article" date="1999" name="J. Biol. Chem.">
        <title>ATP synthase of yeast mitochondria. Isolation of subunit j and disruption of the ATP18 gene.</title>
        <authorList>
            <person name="Arnold I."/>
            <person name="Pfeiffer K."/>
            <person name="Neupert W."/>
            <person name="Stuart R.A."/>
            <person name="Schaegger H."/>
        </authorList>
    </citation>
    <scope>PROTEIN SEQUENCE OF 1-13</scope>
    <scope>IDENTIFICATION</scope>
    <source>
        <strain>ATCC 208353 / W303-1A</strain>
    </source>
</reference>
<reference key="6">
    <citation type="journal article" date="2003" name="Nature">
        <title>Global analysis of protein expression in yeast.</title>
        <authorList>
            <person name="Ghaemmaghami S."/>
            <person name="Huh W.-K."/>
            <person name="Bower K."/>
            <person name="Howson R.W."/>
            <person name="Belle A."/>
            <person name="Dephoure N."/>
            <person name="O'Shea E.K."/>
            <person name="Weissman J.S."/>
        </authorList>
    </citation>
    <scope>LEVEL OF PROTEIN EXPRESSION [LARGE SCALE ANALYSIS]</scope>
</reference>
<reference key="7">
    <citation type="journal article" date="2006" name="J. Proteome Res.">
        <title>Toward the complete yeast mitochondrial proteome: multidimensional separation techniques for mitochondrial proteomics.</title>
        <authorList>
            <person name="Reinders J."/>
            <person name="Zahedi R.P."/>
            <person name="Pfanner N."/>
            <person name="Meisinger C."/>
            <person name="Sickmann A."/>
        </authorList>
    </citation>
    <scope>SUBCELLULAR LOCATION [LARGE SCALE ANALYSIS]</scope>
    <scope>IDENTIFICATION BY MASS SPECTROMETRY</scope>
</reference>
<proteinExistence type="evidence at protein level"/>
<name>ATP18_YEAST</name>
<feature type="chain" id="PRO_0000071697" description="ATP synthase subunit J, mitochondrial">
    <location>
        <begin position="1"/>
        <end position="59"/>
    </location>
</feature>
<feature type="transmembrane region" description="Helical" evidence="1">
    <location>
        <begin position="9"/>
        <end position="25"/>
    </location>
</feature>
<dbReference type="EMBL" id="AF073791">
    <property type="protein sequence ID" value="AAD02949.1"/>
    <property type="molecule type" value="Genomic_DNA"/>
</dbReference>
<dbReference type="EMBL" id="Z46660">
    <property type="status" value="NOT_ANNOTATED_CDS"/>
    <property type="molecule type" value="Genomic_DNA"/>
</dbReference>
<dbReference type="EMBL" id="AY558537">
    <property type="protein sequence ID" value="AAS56863.1"/>
    <property type="molecule type" value="Genomic_DNA"/>
</dbReference>
<dbReference type="EMBL" id="BK006946">
    <property type="protein sequence ID" value="DAA09815.1"/>
    <property type="molecule type" value="Genomic_DNA"/>
</dbReference>
<dbReference type="PIR" id="S78730">
    <property type="entry name" value="S78730"/>
</dbReference>
<dbReference type="RefSeq" id="NP_013629.1">
    <property type="nucleotide sequence ID" value="NM_001184340.1"/>
</dbReference>
<dbReference type="PDB" id="6B2Z">
    <property type="method" value="EM"/>
    <property type="resolution" value="3.60 A"/>
    <property type="chains" value="S/i=1-59"/>
</dbReference>
<dbReference type="PDB" id="6B8H">
    <property type="method" value="EM"/>
    <property type="resolution" value="3.60 A"/>
    <property type="chains" value="i/w=1-59"/>
</dbReference>
<dbReference type="PDB" id="6CP3">
    <property type="method" value="EM"/>
    <property type="resolution" value="3.80 A"/>
    <property type="chains" value="J=1-37"/>
</dbReference>
<dbReference type="PDB" id="6CP5">
    <property type="method" value="EM"/>
    <property type="resolution" value="4.20 A"/>
    <property type="chains" value="J=1-37"/>
</dbReference>
<dbReference type="PDB" id="6CP6">
    <property type="method" value="EM"/>
    <property type="resolution" value="3.60 A"/>
    <property type="chains" value="J=1-37"/>
</dbReference>
<dbReference type="PDB" id="6CP7">
    <property type="method" value="EM"/>
    <property type="resolution" value="4.10 A"/>
    <property type="chains" value="J=1-37"/>
</dbReference>
<dbReference type="PDB" id="6WTD">
    <property type="method" value="EM"/>
    <property type="resolution" value="4.20 A"/>
    <property type="chains" value="J=1-37"/>
</dbReference>
<dbReference type="PDB" id="7TJY">
    <property type="method" value="EM"/>
    <property type="resolution" value="3.80 A"/>
    <property type="chains" value="Y=1-59"/>
</dbReference>
<dbReference type="PDB" id="7TJZ">
    <property type="method" value="EM"/>
    <property type="resolution" value="4.40 A"/>
    <property type="chains" value="Y=1-59"/>
</dbReference>
<dbReference type="PDB" id="7TK0">
    <property type="method" value="EM"/>
    <property type="resolution" value="4.40 A"/>
    <property type="chains" value="Y=1-59"/>
</dbReference>
<dbReference type="PDB" id="7TK1">
    <property type="method" value="EM"/>
    <property type="resolution" value="7.10 A"/>
    <property type="chains" value="Y=1-59"/>
</dbReference>
<dbReference type="PDB" id="7TK2">
    <property type="method" value="EM"/>
    <property type="resolution" value="6.50 A"/>
    <property type="chains" value="Y=1-59"/>
</dbReference>
<dbReference type="PDB" id="7TK3">
    <property type="method" value="EM"/>
    <property type="resolution" value="6.30 A"/>
    <property type="chains" value="Y=1-59"/>
</dbReference>
<dbReference type="PDB" id="7TK4">
    <property type="method" value="EM"/>
    <property type="resolution" value="7.00 A"/>
    <property type="chains" value="Y=1-59"/>
</dbReference>
<dbReference type="PDB" id="7TK5">
    <property type="method" value="EM"/>
    <property type="resolution" value="7.80 A"/>
    <property type="chains" value="Y=1-59"/>
</dbReference>
<dbReference type="PDB" id="7TK6">
    <property type="method" value="EM"/>
    <property type="resolution" value="6.50 A"/>
    <property type="chains" value="Y=1-59"/>
</dbReference>
<dbReference type="PDB" id="7TK7">
    <property type="method" value="EM"/>
    <property type="resolution" value="6.70 A"/>
    <property type="chains" value="Y=1-59"/>
</dbReference>
<dbReference type="PDB" id="7TK8">
    <property type="method" value="EM"/>
    <property type="resolution" value="4.70 A"/>
    <property type="chains" value="Y=1-59"/>
</dbReference>
<dbReference type="PDB" id="7TK9">
    <property type="method" value="EM"/>
    <property type="resolution" value="6.00 A"/>
    <property type="chains" value="Y=1-59"/>
</dbReference>
<dbReference type="PDB" id="7TKA">
    <property type="method" value="EM"/>
    <property type="resolution" value="7.10 A"/>
    <property type="chains" value="Y=1-59"/>
</dbReference>
<dbReference type="PDB" id="7TKB">
    <property type="method" value="EM"/>
    <property type="resolution" value="6.30 A"/>
    <property type="chains" value="Y=1-59"/>
</dbReference>
<dbReference type="PDB" id="7TKC">
    <property type="method" value="EM"/>
    <property type="resolution" value="5.80 A"/>
    <property type="chains" value="Y=1-59"/>
</dbReference>
<dbReference type="PDB" id="7TKD">
    <property type="method" value="EM"/>
    <property type="resolution" value="7.70 A"/>
    <property type="chains" value="Y=1-59"/>
</dbReference>
<dbReference type="PDB" id="7TKE">
    <property type="method" value="EM"/>
    <property type="resolution" value="7.10 A"/>
    <property type="chains" value="Y=1-59"/>
</dbReference>
<dbReference type="PDB" id="7TKF">
    <property type="method" value="EM"/>
    <property type="resolution" value="7.10 A"/>
    <property type="chains" value="Y=1-59"/>
</dbReference>
<dbReference type="PDB" id="7TKG">
    <property type="method" value="EM"/>
    <property type="resolution" value="4.50 A"/>
    <property type="chains" value="Y=1-59"/>
</dbReference>
<dbReference type="PDB" id="7TKH">
    <property type="method" value="EM"/>
    <property type="resolution" value="4.40 A"/>
    <property type="chains" value="Y=1-59"/>
</dbReference>
<dbReference type="PDB" id="7TKI">
    <property type="method" value="EM"/>
    <property type="resolution" value="7.10 A"/>
    <property type="chains" value="Y=1-59"/>
</dbReference>
<dbReference type="PDB" id="7TKJ">
    <property type="method" value="EM"/>
    <property type="resolution" value="7.50 A"/>
    <property type="chains" value="Y=1-59"/>
</dbReference>
<dbReference type="PDB" id="7TKK">
    <property type="method" value="EM"/>
    <property type="resolution" value="7.30 A"/>
    <property type="chains" value="Y=1-59"/>
</dbReference>
<dbReference type="PDB" id="7TKL">
    <property type="method" value="EM"/>
    <property type="resolution" value="6.40 A"/>
    <property type="chains" value="Y=1-59"/>
</dbReference>
<dbReference type="PDB" id="7TKM">
    <property type="method" value="EM"/>
    <property type="resolution" value="4.50 A"/>
    <property type="chains" value="Y=1-59"/>
</dbReference>
<dbReference type="PDB" id="7TKN">
    <property type="method" value="EM"/>
    <property type="resolution" value="7.10 A"/>
    <property type="chains" value="Y=1-59"/>
</dbReference>
<dbReference type="PDB" id="7TKO">
    <property type="method" value="EM"/>
    <property type="resolution" value="4.80 A"/>
    <property type="chains" value="Y=1-59"/>
</dbReference>
<dbReference type="PDB" id="7TKP">
    <property type="method" value="EM"/>
    <property type="resolution" value="4.60 A"/>
    <property type="chains" value="Y=1-59"/>
</dbReference>
<dbReference type="PDB" id="7TKQ">
    <property type="method" value="EM"/>
    <property type="resolution" value="4.50 A"/>
    <property type="chains" value="Y=1-59"/>
</dbReference>
<dbReference type="PDB" id="7TKR">
    <property type="method" value="EM"/>
    <property type="resolution" value="6.50 A"/>
    <property type="chains" value="Y=1-59"/>
</dbReference>
<dbReference type="PDB" id="7TKS">
    <property type="method" value="EM"/>
    <property type="resolution" value="7.50 A"/>
    <property type="chains" value="Y=1-59"/>
</dbReference>
<dbReference type="PDB" id="8F29">
    <property type="method" value="EM"/>
    <property type="resolution" value="4.00 A"/>
    <property type="chains" value="J=1-37"/>
</dbReference>
<dbReference type="PDB" id="8F39">
    <property type="method" value="EM"/>
    <property type="resolution" value="3.50 A"/>
    <property type="chains" value="J=1-37"/>
</dbReference>
<dbReference type="PDB" id="8FKJ">
    <property type="method" value="EM"/>
    <property type="resolution" value="4.20 A"/>
    <property type="chains" value="J=1-37"/>
</dbReference>
<dbReference type="PDB" id="8FL8">
    <property type="method" value="EM"/>
    <property type="resolution" value="4.20 A"/>
    <property type="chains" value="J=1-37"/>
</dbReference>
<dbReference type="PDBsum" id="6B2Z"/>
<dbReference type="PDBsum" id="6B8H"/>
<dbReference type="PDBsum" id="6CP3"/>
<dbReference type="PDBsum" id="6CP5"/>
<dbReference type="PDBsum" id="6CP6"/>
<dbReference type="PDBsum" id="6CP7"/>
<dbReference type="PDBsum" id="6WTD"/>
<dbReference type="PDBsum" id="7TJY"/>
<dbReference type="PDBsum" id="7TJZ"/>
<dbReference type="PDBsum" id="7TK0"/>
<dbReference type="PDBsum" id="7TK1"/>
<dbReference type="PDBsum" id="7TK2"/>
<dbReference type="PDBsum" id="7TK3"/>
<dbReference type="PDBsum" id="7TK4"/>
<dbReference type="PDBsum" id="7TK5"/>
<dbReference type="PDBsum" id="7TK6"/>
<dbReference type="PDBsum" id="7TK7"/>
<dbReference type="PDBsum" id="7TK8"/>
<dbReference type="PDBsum" id="7TK9"/>
<dbReference type="PDBsum" id="7TKA"/>
<dbReference type="PDBsum" id="7TKB"/>
<dbReference type="PDBsum" id="7TKC"/>
<dbReference type="PDBsum" id="7TKD"/>
<dbReference type="PDBsum" id="7TKE"/>
<dbReference type="PDBsum" id="7TKF"/>
<dbReference type="PDBsum" id="7TKG"/>
<dbReference type="PDBsum" id="7TKH"/>
<dbReference type="PDBsum" id="7TKI"/>
<dbReference type="PDBsum" id="7TKJ"/>
<dbReference type="PDBsum" id="7TKK"/>
<dbReference type="PDBsum" id="7TKL"/>
<dbReference type="PDBsum" id="7TKM"/>
<dbReference type="PDBsum" id="7TKN"/>
<dbReference type="PDBsum" id="7TKO"/>
<dbReference type="PDBsum" id="7TKP"/>
<dbReference type="PDBsum" id="7TKQ"/>
<dbReference type="PDBsum" id="7TKR"/>
<dbReference type="PDBsum" id="7TKS"/>
<dbReference type="PDBsum" id="8F29"/>
<dbReference type="PDBsum" id="8F39"/>
<dbReference type="PDBsum" id="8FKJ"/>
<dbReference type="PDBsum" id="8FL8"/>
<dbReference type="EMDB" id="EMD-21894"/>
<dbReference type="EMDB" id="EMD-25946"/>
<dbReference type="EMDB" id="EMD-25947"/>
<dbReference type="EMDB" id="EMD-25948"/>
<dbReference type="EMDB" id="EMD-25949"/>
<dbReference type="EMDB" id="EMD-25954"/>
<dbReference type="EMDB" id="EMD-25955"/>
<dbReference type="EMDB" id="EMD-25956"/>
<dbReference type="EMDB" id="EMD-25957"/>
<dbReference type="EMDB" id="EMD-25958"/>
<dbReference type="EMDB" id="EMD-25959"/>
<dbReference type="EMDB" id="EMD-25960"/>
<dbReference type="EMDB" id="EMD-25961"/>
<dbReference type="EMDB" id="EMD-25962"/>
<dbReference type="EMDB" id="EMD-25963"/>
<dbReference type="EMDB" id="EMD-25964"/>
<dbReference type="EMDB" id="EMD-25965"/>
<dbReference type="EMDB" id="EMD-25966"/>
<dbReference type="EMDB" id="EMD-25967"/>
<dbReference type="EMDB" id="EMD-25968"/>
<dbReference type="EMDB" id="EMD-25969"/>
<dbReference type="EMDB" id="EMD-25970"/>
<dbReference type="EMDB" id="EMD-25971"/>
<dbReference type="EMDB" id="EMD-25972"/>
<dbReference type="EMDB" id="EMD-25973"/>
<dbReference type="EMDB" id="EMD-25974"/>
<dbReference type="EMDB" id="EMD-25975"/>
<dbReference type="EMDB" id="EMD-25976"/>
<dbReference type="EMDB" id="EMD-25977"/>
<dbReference type="EMDB" id="EMD-25978"/>
<dbReference type="EMDB" id="EMD-25979"/>
<dbReference type="EMDB" id="EMD-25980"/>
<dbReference type="EMDB" id="EMD-28809"/>
<dbReference type="EMDB" id="EMD-28835"/>
<dbReference type="EMDB" id="EMD-7036"/>
<dbReference type="EMDB" id="EMD-7546"/>
<dbReference type="EMDB" id="EMD-7547"/>
<dbReference type="EMDB" id="EMD-7548"/>
<dbReference type="EMDB" id="EMD-7549"/>
<dbReference type="SMR" id="P81450"/>
<dbReference type="BioGRID" id="35059">
    <property type="interactions" value="362"/>
</dbReference>
<dbReference type="ComplexPortal" id="CPX-3281">
    <property type="entry name" value="Mitochondrial proton-transporting ATP synthase complex"/>
</dbReference>
<dbReference type="DIP" id="DIP-3034N"/>
<dbReference type="FunCoup" id="P81450">
    <property type="interactions" value="150"/>
</dbReference>
<dbReference type="IntAct" id="P81450">
    <property type="interactions" value="16"/>
</dbReference>
<dbReference type="STRING" id="4932.YML081C-A"/>
<dbReference type="TCDB" id="8.A.73.2.4">
    <property type="family name" value="the mitochondrial atp synthase stress-responsive protein (masp) family"/>
</dbReference>
<dbReference type="iPTMnet" id="P81450"/>
<dbReference type="PaxDb" id="4932-YML081C-A"/>
<dbReference type="PeptideAtlas" id="P81450"/>
<dbReference type="TopDownProteomics" id="P81450"/>
<dbReference type="EnsemblFungi" id="YML081C-A_mRNA">
    <property type="protein sequence ID" value="YML081C-A"/>
    <property type="gene ID" value="YML081C-A"/>
</dbReference>
<dbReference type="GeneID" id="854893"/>
<dbReference type="KEGG" id="sce:YML081C-A"/>
<dbReference type="AGR" id="SGD:S000007247"/>
<dbReference type="SGD" id="S000007247">
    <property type="gene designation" value="ATP18"/>
</dbReference>
<dbReference type="VEuPathDB" id="FungiDB:YML081C-A"/>
<dbReference type="eggNOG" id="ENOG502SC94">
    <property type="taxonomic scope" value="Eukaryota"/>
</dbReference>
<dbReference type="HOGENOM" id="CLU_174950_0_0_1"/>
<dbReference type="InParanoid" id="P81450"/>
<dbReference type="OMA" id="KPMWPFY"/>
<dbReference type="OrthoDB" id="5520611at2759"/>
<dbReference type="BioCyc" id="YEAST:G3O-33009-MONOMER"/>
<dbReference type="BioGRID-ORCS" id="854893">
    <property type="hits" value="0 hits in 10 CRISPR screens"/>
</dbReference>
<dbReference type="PRO" id="PR:P81450"/>
<dbReference type="Proteomes" id="UP000002311">
    <property type="component" value="Chromosome XIII"/>
</dbReference>
<dbReference type="RNAct" id="P81450">
    <property type="molecule type" value="protein"/>
</dbReference>
<dbReference type="GO" id="GO:0005743">
    <property type="term" value="C:mitochondrial inner membrane"/>
    <property type="evidence" value="ECO:0000314"/>
    <property type="project" value="ComplexPortal"/>
</dbReference>
<dbReference type="GO" id="GO:0005739">
    <property type="term" value="C:mitochondrion"/>
    <property type="evidence" value="ECO:0007005"/>
    <property type="project" value="SGD"/>
</dbReference>
<dbReference type="GO" id="GO:0045259">
    <property type="term" value="C:proton-transporting ATP synthase complex"/>
    <property type="evidence" value="ECO:0000314"/>
    <property type="project" value="SGD"/>
</dbReference>
<dbReference type="GO" id="GO:0015078">
    <property type="term" value="F:proton transmembrane transporter activity"/>
    <property type="evidence" value="ECO:0007669"/>
    <property type="project" value="InterPro"/>
</dbReference>
<dbReference type="GO" id="GO:0033615">
    <property type="term" value="P:mitochondrial proton-transporting ATP synthase complex assembly"/>
    <property type="evidence" value="ECO:0000315"/>
    <property type="project" value="SGD"/>
</dbReference>
<dbReference type="GO" id="GO:0065003">
    <property type="term" value="P:protein-containing complex assembly"/>
    <property type="evidence" value="ECO:0000315"/>
    <property type="project" value="SGD"/>
</dbReference>
<dbReference type="GO" id="GO:0015986">
    <property type="term" value="P:proton motive force-driven ATP synthesis"/>
    <property type="evidence" value="ECO:0000314"/>
    <property type="project" value="ComplexPortal"/>
</dbReference>
<dbReference type="InterPro" id="IPR006995">
    <property type="entry name" value="ATP_synth_F0_jsu"/>
</dbReference>
<dbReference type="PANTHER" id="PTHR28060">
    <property type="entry name" value="ATP SYNTHASE SUBUNIT J, MITOCHONDRIAL"/>
    <property type="match status" value="1"/>
</dbReference>
<dbReference type="PANTHER" id="PTHR28060:SF1">
    <property type="entry name" value="ATP SYNTHASE SUBUNIT J, MITOCHONDRIAL"/>
    <property type="match status" value="1"/>
</dbReference>
<dbReference type="Pfam" id="PF04911">
    <property type="entry name" value="ATP-synt_J"/>
    <property type="match status" value="1"/>
</dbReference>
<evidence type="ECO:0000255" key="1"/>
<evidence type="ECO:0000269" key="2">
    <source>
    </source>
</evidence>
<evidence type="ECO:0000269" key="3">
    <source>
    </source>
</evidence>
<evidence type="ECO:0000269" key="4">
    <source>
    </source>
</evidence>
<evidence type="ECO:0000305" key="5"/>